<proteinExistence type="inferred from homology"/>
<feature type="chain" id="PRO_0000124341" description="Small ribosomal subunit protein uS7">
    <location>
        <begin position="1"/>
        <end position="156"/>
    </location>
</feature>
<organism>
    <name type="scientific">Staphylococcus aureus (strain COL)</name>
    <dbReference type="NCBI Taxonomy" id="93062"/>
    <lineage>
        <taxon>Bacteria</taxon>
        <taxon>Bacillati</taxon>
        <taxon>Bacillota</taxon>
        <taxon>Bacilli</taxon>
        <taxon>Bacillales</taxon>
        <taxon>Staphylococcaceae</taxon>
        <taxon>Staphylococcus</taxon>
    </lineage>
</organism>
<keyword id="KW-0687">Ribonucleoprotein</keyword>
<keyword id="KW-0689">Ribosomal protein</keyword>
<keyword id="KW-0694">RNA-binding</keyword>
<keyword id="KW-0699">rRNA-binding</keyword>
<keyword id="KW-0820">tRNA-binding</keyword>
<accession>Q5HIC9</accession>
<dbReference type="EMBL" id="CP000046">
    <property type="protein sequence ID" value="AAW37702.1"/>
    <property type="molecule type" value="Genomic_DNA"/>
</dbReference>
<dbReference type="RefSeq" id="WP_001137495.1">
    <property type="nucleotide sequence ID" value="NZ_JBGOFO010000009.1"/>
</dbReference>
<dbReference type="SMR" id="Q5HIC9"/>
<dbReference type="GeneID" id="98344880"/>
<dbReference type="KEGG" id="sac:SACOL0592"/>
<dbReference type="HOGENOM" id="CLU_072226_1_1_9"/>
<dbReference type="Proteomes" id="UP000000530">
    <property type="component" value="Chromosome"/>
</dbReference>
<dbReference type="GO" id="GO:0015935">
    <property type="term" value="C:small ribosomal subunit"/>
    <property type="evidence" value="ECO:0007669"/>
    <property type="project" value="InterPro"/>
</dbReference>
<dbReference type="GO" id="GO:0019843">
    <property type="term" value="F:rRNA binding"/>
    <property type="evidence" value="ECO:0007669"/>
    <property type="project" value="UniProtKB-UniRule"/>
</dbReference>
<dbReference type="GO" id="GO:0003735">
    <property type="term" value="F:structural constituent of ribosome"/>
    <property type="evidence" value="ECO:0007669"/>
    <property type="project" value="InterPro"/>
</dbReference>
<dbReference type="GO" id="GO:0000049">
    <property type="term" value="F:tRNA binding"/>
    <property type="evidence" value="ECO:0007669"/>
    <property type="project" value="UniProtKB-UniRule"/>
</dbReference>
<dbReference type="GO" id="GO:0006412">
    <property type="term" value="P:translation"/>
    <property type="evidence" value="ECO:0007669"/>
    <property type="project" value="UniProtKB-UniRule"/>
</dbReference>
<dbReference type="CDD" id="cd14869">
    <property type="entry name" value="uS7_Bacteria"/>
    <property type="match status" value="1"/>
</dbReference>
<dbReference type="FunFam" id="1.10.455.10:FF:000001">
    <property type="entry name" value="30S ribosomal protein S7"/>
    <property type="match status" value="1"/>
</dbReference>
<dbReference type="Gene3D" id="1.10.455.10">
    <property type="entry name" value="Ribosomal protein S7 domain"/>
    <property type="match status" value="1"/>
</dbReference>
<dbReference type="HAMAP" id="MF_00480_B">
    <property type="entry name" value="Ribosomal_uS7_B"/>
    <property type="match status" value="1"/>
</dbReference>
<dbReference type="InterPro" id="IPR000235">
    <property type="entry name" value="Ribosomal_uS7"/>
</dbReference>
<dbReference type="InterPro" id="IPR005717">
    <property type="entry name" value="Ribosomal_uS7_bac/org-type"/>
</dbReference>
<dbReference type="InterPro" id="IPR020606">
    <property type="entry name" value="Ribosomal_uS7_CS"/>
</dbReference>
<dbReference type="InterPro" id="IPR023798">
    <property type="entry name" value="Ribosomal_uS7_dom"/>
</dbReference>
<dbReference type="InterPro" id="IPR036823">
    <property type="entry name" value="Ribosomal_uS7_dom_sf"/>
</dbReference>
<dbReference type="NCBIfam" id="TIGR01029">
    <property type="entry name" value="rpsG_bact"/>
    <property type="match status" value="1"/>
</dbReference>
<dbReference type="PANTHER" id="PTHR11205">
    <property type="entry name" value="RIBOSOMAL PROTEIN S7"/>
    <property type="match status" value="1"/>
</dbReference>
<dbReference type="Pfam" id="PF00177">
    <property type="entry name" value="Ribosomal_S7"/>
    <property type="match status" value="1"/>
</dbReference>
<dbReference type="PIRSF" id="PIRSF002122">
    <property type="entry name" value="RPS7p_RPS7a_RPS5e_RPS7o"/>
    <property type="match status" value="1"/>
</dbReference>
<dbReference type="SUPFAM" id="SSF47973">
    <property type="entry name" value="Ribosomal protein S7"/>
    <property type="match status" value="1"/>
</dbReference>
<dbReference type="PROSITE" id="PS00052">
    <property type="entry name" value="RIBOSOMAL_S7"/>
    <property type="match status" value="1"/>
</dbReference>
<comment type="function">
    <text evidence="1">One of the primary rRNA binding proteins, it binds directly to 16S rRNA where it nucleates assembly of the head domain of the 30S subunit. Is located at the subunit interface close to the decoding center, probably blocks exit of the E-site tRNA.</text>
</comment>
<comment type="subunit">
    <text evidence="1">Part of the 30S ribosomal subunit. Contacts proteins S9 and S11.</text>
</comment>
<comment type="similarity">
    <text evidence="1">Belongs to the universal ribosomal protein uS7 family.</text>
</comment>
<gene>
    <name evidence="1" type="primary">rpsG</name>
    <name type="ordered locus">SACOL0592</name>
</gene>
<sequence>MPRKGSVPKRDVLPDPIHNSKLVTKLINKIMLDGKRGTAQRILYSAFDLVEQRSGRDALEVFEEAINNIMPVLEVKARRVGGSNYQVPVEVRPERRTTLGLRWLVNYARLRGEKTMEDRLANEILDAANNTGGAVKKREDTHKMAEANKAFAHYRW</sequence>
<name>RS7_STAAC</name>
<evidence type="ECO:0000255" key="1">
    <source>
        <dbReference type="HAMAP-Rule" id="MF_00480"/>
    </source>
</evidence>
<evidence type="ECO:0000305" key="2"/>
<reference key="1">
    <citation type="journal article" date="2005" name="J. Bacteriol.">
        <title>Insights on evolution of virulence and resistance from the complete genome analysis of an early methicillin-resistant Staphylococcus aureus strain and a biofilm-producing methicillin-resistant Staphylococcus epidermidis strain.</title>
        <authorList>
            <person name="Gill S.R."/>
            <person name="Fouts D.E."/>
            <person name="Archer G.L."/>
            <person name="Mongodin E.F."/>
            <person name="DeBoy R.T."/>
            <person name="Ravel J."/>
            <person name="Paulsen I.T."/>
            <person name="Kolonay J.F."/>
            <person name="Brinkac L.M."/>
            <person name="Beanan M.J."/>
            <person name="Dodson R.J."/>
            <person name="Daugherty S.C."/>
            <person name="Madupu R."/>
            <person name="Angiuoli S.V."/>
            <person name="Durkin A.S."/>
            <person name="Haft D.H."/>
            <person name="Vamathevan J.J."/>
            <person name="Khouri H."/>
            <person name="Utterback T.R."/>
            <person name="Lee C."/>
            <person name="Dimitrov G."/>
            <person name="Jiang L."/>
            <person name="Qin H."/>
            <person name="Weidman J."/>
            <person name="Tran K."/>
            <person name="Kang K.H."/>
            <person name="Hance I.R."/>
            <person name="Nelson K.E."/>
            <person name="Fraser C.M."/>
        </authorList>
    </citation>
    <scope>NUCLEOTIDE SEQUENCE [LARGE SCALE GENOMIC DNA]</scope>
    <source>
        <strain>COL</strain>
    </source>
</reference>
<protein>
    <recommendedName>
        <fullName evidence="1">Small ribosomal subunit protein uS7</fullName>
    </recommendedName>
    <alternativeName>
        <fullName evidence="2">30S ribosomal protein S7</fullName>
    </alternativeName>
</protein>